<reference key="1">
    <citation type="journal article" date="1996" name="Yeast">
        <title>Analysis of a 62 kb DNA sequence of chromosome X reveals 36 open reading frames and a gene cluster with a counterpart on chromosome XI.</title>
        <authorList>
            <person name="Huang M.-E."/>
            <person name="Manus V."/>
            <person name="Chuat J.-C."/>
            <person name="Galibert F."/>
        </authorList>
    </citation>
    <scope>NUCLEOTIDE SEQUENCE [GENOMIC DNA]</scope>
    <source>
        <strain>ATCC 204508 / S288c</strain>
    </source>
</reference>
<reference key="2">
    <citation type="journal article" date="1996" name="EMBO J.">
        <title>Complete nucleotide sequence of Saccharomyces cerevisiae chromosome X.</title>
        <authorList>
            <person name="Galibert F."/>
            <person name="Alexandraki D."/>
            <person name="Baur A."/>
            <person name="Boles E."/>
            <person name="Chalwatzis N."/>
            <person name="Chuat J.-C."/>
            <person name="Coster F."/>
            <person name="Cziepluch C."/>
            <person name="de Haan M."/>
            <person name="Domdey H."/>
            <person name="Durand P."/>
            <person name="Entian K.-D."/>
            <person name="Gatius M."/>
            <person name="Goffeau A."/>
            <person name="Grivell L.A."/>
            <person name="Hennemann A."/>
            <person name="Herbert C.J."/>
            <person name="Heumann K."/>
            <person name="Hilger F."/>
            <person name="Hollenberg C.P."/>
            <person name="Huang M.-E."/>
            <person name="Jacq C."/>
            <person name="Jauniaux J.-C."/>
            <person name="Katsoulou C."/>
            <person name="Kirchrath L."/>
            <person name="Kleine K."/>
            <person name="Kordes E."/>
            <person name="Koetter P."/>
            <person name="Liebl S."/>
            <person name="Louis E.J."/>
            <person name="Manus V."/>
            <person name="Mewes H.-W."/>
            <person name="Miosga T."/>
            <person name="Obermaier B."/>
            <person name="Perea J."/>
            <person name="Pohl T.M."/>
            <person name="Portetelle D."/>
            <person name="Pujol A."/>
            <person name="Purnelle B."/>
            <person name="Ramezani Rad M."/>
            <person name="Rasmussen S.W."/>
            <person name="Rose M."/>
            <person name="Rossau R."/>
            <person name="Schaaff-Gerstenschlaeger I."/>
            <person name="Smits P.H.M."/>
            <person name="Scarcez T."/>
            <person name="Soriano N."/>
            <person name="To Van D."/>
            <person name="Tzermia M."/>
            <person name="Van Broekhoven A."/>
            <person name="Vandenbol M."/>
            <person name="Wedler H."/>
            <person name="von Wettstein D."/>
            <person name="Wambutt R."/>
            <person name="Zagulski M."/>
            <person name="Zollner A."/>
            <person name="Karpfinger-Hartl L."/>
        </authorList>
    </citation>
    <scope>NUCLEOTIDE SEQUENCE [LARGE SCALE GENOMIC DNA]</scope>
    <source>
        <strain>ATCC 204508 / S288c</strain>
    </source>
</reference>
<reference key="3">
    <citation type="journal article" date="2014" name="G3 (Bethesda)">
        <title>The reference genome sequence of Saccharomyces cerevisiae: Then and now.</title>
        <authorList>
            <person name="Engel S.R."/>
            <person name="Dietrich F.S."/>
            <person name="Fisk D.G."/>
            <person name="Binkley G."/>
            <person name="Balakrishnan R."/>
            <person name="Costanzo M.C."/>
            <person name="Dwight S.S."/>
            <person name="Hitz B.C."/>
            <person name="Karra K."/>
            <person name="Nash R.S."/>
            <person name="Weng S."/>
            <person name="Wong E.D."/>
            <person name="Lloyd P."/>
            <person name="Skrzypek M.S."/>
            <person name="Miyasato S.R."/>
            <person name="Simison M."/>
            <person name="Cherry J.M."/>
        </authorList>
    </citation>
    <scope>GENOME REANNOTATION</scope>
    <source>
        <strain>ATCC 204508 / S288c</strain>
    </source>
</reference>
<sequence length="122" mass="13981">MYSMAFLASSGLVANSSATVFKLNRALNLLAKTVLPDLLTKMSLSCSRVHSSTFSWKCFSKLVDMFFFFFLAWYVRRTTVYPNLNLELPSNIHVYSLDLPYVIYMIKTFQLIEKNFLSSHAG</sequence>
<feature type="signal peptide" evidence="1">
    <location>
        <begin position="1"/>
        <end position="18"/>
    </location>
</feature>
<feature type="chain" id="PRO_0000014334" description="Putative uncharacterized protein YJR071W">
    <location>
        <begin position="19"/>
        <end position="122"/>
    </location>
</feature>
<feature type="glycosylation site" description="N-linked (GlcNAc...) asparagine" evidence="1">
    <location>
        <position position="15"/>
    </location>
</feature>
<gene>
    <name type="ordered locus">YJR071W</name>
    <name type="ORF">J1818</name>
</gene>
<proteinExistence type="uncertain"/>
<name>YJ41_YEAST</name>
<comment type="caution">
    <text evidence="2">Product of a dubious gene prediction unlikely to encode a functional protein. Because of that it is not part of the S.cerevisiae S288c complete/reference proteome set.</text>
</comment>
<dbReference type="EMBL" id="Z49570">
    <property type="protein sequence ID" value="CAA89599.1"/>
    <property type="molecule type" value="Genomic_DNA"/>
</dbReference>
<dbReference type="PIR" id="S57090">
    <property type="entry name" value="S57090"/>
</dbReference>
<dbReference type="iPTMnet" id="P47121"/>
<dbReference type="PaxDb" id="4932-YJR071W"/>
<dbReference type="EnsemblFungi" id="YJR071W_mRNA">
    <property type="protein sequence ID" value="YJR071W"/>
    <property type="gene ID" value="YJR071W"/>
</dbReference>
<dbReference type="AGR" id="SGD:S000003832"/>
<dbReference type="SGD" id="S000003832">
    <property type="gene designation" value="YJR071W"/>
</dbReference>
<dbReference type="HOGENOM" id="CLU_2028538_0_0_1"/>
<accession>P47121</accession>
<keyword id="KW-0325">Glycoprotein</keyword>
<keyword id="KW-0732">Signal</keyword>
<organism>
    <name type="scientific">Saccharomyces cerevisiae (strain ATCC 204508 / S288c)</name>
    <name type="common">Baker's yeast</name>
    <dbReference type="NCBI Taxonomy" id="559292"/>
    <lineage>
        <taxon>Eukaryota</taxon>
        <taxon>Fungi</taxon>
        <taxon>Dikarya</taxon>
        <taxon>Ascomycota</taxon>
        <taxon>Saccharomycotina</taxon>
        <taxon>Saccharomycetes</taxon>
        <taxon>Saccharomycetales</taxon>
        <taxon>Saccharomycetaceae</taxon>
        <taxon>Saccharomyces</taxon>
    </lineage>
</organism>
<protein>
    <recommendedName>
        <fullName>Putative uncharacterized protein YJR071W</fullName>
    </recommendedName>
</protein>
<evidence type="ECO:0000255" key="1"/>
<evidence type="ECO:0000305" key="2">
    <source>
    </source>
</evidence>